<reference key="1">
    <citation type="journal article" date="2003" name="Nature">
        <title>Genome divergence in two Prochlorococcus ecotypes reflects oceanic niche differentiation.</title>
        <authorList>
            <person name="Rocap G."/>
            <person name="Larimer F.W."/>
            <person name="Lamerdin J.E."/>
            <person name="Malfatti S."/>
            <person name="Chain P."/>
            <person name="Ahlgren N.A."/>
            <person name="Arellano A."/>
            <person name="Coleman M."/>
            <person name="Hauser L."/>
            <person name="Hess W.R."/>
            <person name="Johnson Z.I."/>
            <person name="Land M.L."/>
            <person name="Lindell D."/>
            <person name="Post A.F."/>
            <person name="Regala W."/>
            <person name="Shah M."/>
            <person name="Shaw S.L."/>
            <person name="Steglich C."/>
            <person name="Sullivan M.B."/>
            <person name="Ting C.S."/>
            <person name="Tolonen A."/>
            <person name="Webb E.A."/>
            <person name="Zinser E.R."/>
            <person name="Chisholm S.W."/>
        </authorList>
    </citation>
    <scope>NUCLEOTIDE SEQUENCE [LARGE SCALE GENOMIC DNA]</scope>
    <source>
        <strain>MIT 9313</strain>
    </source>
</reference>
<sequence length="329" mass="35158">MQFIDQARITVRAGRGGDGIMAFRREKYVPAGGPSGGDGGNGGNVVLEADGNLQTLLDFKYKRLFPAPDGRRGGPNRCTGASGKDLIIKVPCGTEVRHLYTGILLGDLTRSEDLLVVAFGGRGGLGNAHYLSNRNRAPEKFTEGRDGEEWFLQLELKLLAEVGIIGLPNAGKSTLISVLSAARPKIADYPFTTLVPNLGVVRRPSGDGTVFADIPGLIAGAAQGAGLGHDFLRHIERTRLLIHVLDGGAEDPVEDLLVVEKELVAYGHDLVERPRLLVLNKQELLDEQHQDQLVDALQAASGRSLILISAAMGLGLEGLLAQVWKELGV</sequence>
<feature type="chain" id="PRO_0000386138" description="GTPase Obg">
    <location>
        <begin position="1"/>
        <end position="329"/>
    </location>
</feature>
<feature type="domain" description="Obg" evidence="2">
    <location>
        <begin position="1"/>
        <end position="159"/>
    </location>
</feature>
<feature type="domain" description="OBG-type G" evidence="1">
    <location>
        <begin position="160"/>
        <end position="328"/>
    </location>
</feature>
<feature type="binding site" evidence="1">
    <location>
        <begin position="166"/>
        <end position="173"/>
    </location>
    <ligand>
        <name>ATP</name>
        <dbReference type="ChEBI" id="CHEBI:30616"/>
    </ligand>
</feature>
<feature type="binding site" evidence="1">
    <location>
        <position position="173"/>
    </location>
    <ligand>
        <name>Mg(2+)</name>
        <dbReference type="ChEBI" id="CHEBI:18420"/>
    </ligand>
</feature>
<feature type="binding site" evidence="1">
    <location>
        <begin position="191"/>
        <end position="195"/>
    </location>
    <ligand>
        <name>ATP</name>
        <dbReference type="ChEBI" id="CHEBI:30616"/>
    </ligand>
</feature>
<feature type="binding site" evidence="1">
    <location>
        <position position="193"/>
    </location>
    <ligand>
        <name>Mg(2+)</name>
        <dbReference type="ChEBI" id="CHEBI:18420"/>
    </ligand>
</feature>
<feature type="binding site" evidence="1">
    <location>
        <begin position="213"/>
        <end position="216"/>
    </location>
    <ligand>
        <name>ATP</name>
        <dbReference type="ChEBI" id="CHEBI:30616"/>
    </ligand>
</feature>
<feature type="binding site" evidence="1">
    <location>
        <begin position="280"/>
        <end position="283"/>
    </location>
    <ligand>
        <name>ATP</name>
        <dbReference type="ChEBI" id="CHEBI:30616"/>
    </ligand>
</feature>
<feature type="binding site" evidence="1">
    <location>
        <begin position="309"/>
        <end position="311"/>
    </location>
    <ligand>
        <name>ATP</name>
        <dbReference type="ChEBI" id="CHEBI:30616"/>
    </ligand>
</feature>
<comment type="function">
    <text evidence="1">An essential GTPase which binds GTP, GDP and possibly (p)ppGpp with moderate affinity, with high nucleotide exchange rates and a fairly low GTP hydrolysis rate. Plays a role in control of the cell cycle, stress response, ribosome biogenesis and in those bacteria that undergo differentiation, in morphogenesis control.</text>
</comment>
<comment type="cofactor">
    <cofactor evidence="1">
        <name>Mg(2+)</name>
        <dbReference type="ChEBI" id="CHEBI:18420"/>
    </cofactor>
</comment>
<comment type="subunit">
    <text evidence="1">Monomer.</text>
</comment>
<comment type="subcellular location">
    <subcellularLocation>
        <location evidence="1">Cytoplasm</location>
    </subcellularLocation>
</comment>
<comment type="similarity">
    <text evidence="1">Belongs to the TRAFAC class OBG-HflX-like GTPase superfamily. OBG GTPase family.</text>
</comment>
<evidence type="ECO:0000255" key="1">
    <source>
        <dbReference type="HAMAP-Rule" id="MF_01454"/>
    </source>
</evidence>
<evidence type="ECO:0000255" key="2">
    <source>
        <dbReference type="PROSITE-ProRule" id="PRU01231"/>
    </source>
</evidence>
<keyword id="KW-0067">ATP-binding</keyword>
<keyword id="KW-0963">Cytoplasm</keyword>
<keyword id="KW-0342">GTP-binding</keyword>
<keyword id="KW-0378">Hydrolase</keyword>
<keyword id="KW-0460">Magnesium</keyword>
<keyword id="KW-0479">Metal-binding</keyword>
<keyword id="KW-0547">Nucleotide-binding</keyword>
<keyword id="KW-1185">Reference proteome</keyword>
<proteinExistence type="inferred from homology"/>
<protein>
    <recommendedName>
        <fullName evidence="1">GTPase Obg</fullName>
        <ecNumber evidence="1">3.6.5.-</ecNumber>
    </recommendedName>
    <alternativeName>
        <fullName evidence="1">GTP-binding protein Obg</fullName>
    </alternativeName>
</protein>
<accession>Q7TUR3</accession>
<dbReference type="EC" id="3.6.5.-" evidence="1"/>
<dbReference type="EMBL" id="BX548175">
    <property type="protein sequence ID" value="CAE21719.1"/>
    <property type="molecule type" value="Genomic_DNA"/>
</dbReference>
<dbReference type="RefSeq" id="WP_011130911.1">
    <property type="nucleotide sequence ID" value="NC_005071.1"/>
</dbReference>
<dbReference type="SMR" id="Q7TUR3"/>
<dbReference type="KEGG" id="pmt:PMT_1544"/>
<dbReference type="eggNOG" id="COG0536">
    <property type="taxonomic scope" value="Bacteria"/>
</dbReference>
<dbReference type="HOGENOM" id="CLU_011747_2_3_3"/>
<dbReference type="OrthoDB" id="9807318at2"/>
<dbReference type="Proteomes" id="UP000001423">
    <property type="component" value="Chromosome"/>
</dbReference>
<dbReference type="GO" id="GO:0005737">
    <property type="term" value="C:cytoplasm"/>
    <property type="evidence" value="ECO:0007669"/>
    <property type="project" value="UniProtKB-SubCell"/>
</dbReference>
<dbReference type="GO" id="GO:0005524">
    <property type="term" value="F:ATP binding"/>
    <property type="evidence" value="ECO:0007669"/>
    <property type="project" value="UniProtKB-KW"/>
</dbReference>
<dbReference type="GO" id="GO:0005525">
    <property type="term" value="F:GTP binding"/>
    <property type="evidence" value="ECO:0007669"/>
    <property type="project" value="UniProtKB-UniRule"/>
</dbReference>
<dbReference type="GO" id="GO:0003924">
    <property type="term" value="F:GTPase activity"/>
    <property type="evidence" value="ECO:0007669"/>
    <property type="project" value="UniProtKB-UniRule"/>
</dbReference>
<dbReference type="GO" id="GO:0000287">
    <property type="term" value="F:magnesium ion binding"/>
    <property type="evidence" value="ECO:0007669"/>
    <property type="project" value="InterPro"/>
</dbReference>
<dbReference type="GO" id="GO:0042254">
    <property type="term" value="P:ribosome biogenesis"/>
    <property type="evidence" value="ECO:0007669"/>
    <property type="project" value="UniProtKB-UniRule"/>
</dbReference>
<dbReference type="CDD" id="cd01898">
    <property type="entry name" value="Obg"/>
    <property type="match status" value="1"/>
</dbReference>
<dbReference type="FunFam" id="2.70.210.12:FF:000001">
    <property type="entry name" value="GTPase Obg"/>
    <property type="match status" value="1"/>
</dbReference>
<dbReference type="Gene3D" id="2.70.210.12">
    <property type="entry name" value="GTP1/OBG domain"/>
    <property type="match status" value="1"/>
</dbReference>
<dbReference type="Gene3D" id="3.40.50.300">
    <property type="entry name" value="P-loop containing nucleotide triphosphate hydrolases"/>
    <property type="match status" value="1"/>
</dbReference>
<dbReference type="HAMAP" id="MF_01454">
    <property type="entry name" value="GTPase_Obg"/>
    <property type="match status" value="1"/>
</dbReference>
<dbReference type="InterPro" id="IPR031167">
    <property type="entry name" value="G_OBG"/>
</dbReference>
<dbReference type="InterPro" id="IPR006073">
    <property type="entry name" value="GTP-bd"/>
</dbReference>
<dbReference type="InterPro" id="IPR014100">
    <property type="entry name" value="GTP-bd_Obg/CgtA"/>
</dbReference>
<dbReference type="InterPro" id="IPR006169">
    <property type="entry name" value="GTP1_OBG_dom"/>
</dbReference>
<dbReference type="InterPro" id="IPR036726">
    <property type="entry name" value="GTP1_OBG_dom_sf"/>
</dbReference>
<dbReference type="InterPro" id="IPR045086">
    <property type="entry name" value="OBG_GTPase"/>
</dbReference>
<dbReference type="InterPro" id="IPR027417">
    <property type="entry name" value="P-loop_NTPase"/>
</dbReference>
<dbReference type="NCBIfam" id="TIGR02729">
    <property type="entry name" value="Obg_CgtA"/>
    <property type="match status" value="1"/>
</dbReference>
<dbReference type="NCBIfam" id="NF008955">
    <property type="entry name" value="PRK12297.1"/>
    <property type="match status" value="1"/>
</dbReference>
<dbReference type="NCBIfam" id="NF008956">
    <property type="entry name" value="PRK12299.1"/>
    <property type="match status" value="1"/>
</dbReference>
<dbReference type="PANTHER" id="PTHR11702">
    <property type="entry name" value="DEVELOPMENTALLY REGULATED GTP-BINDING PROTEIN-RELATED"/>
    <property type="match status" value="1"/>
</dbReference>
<dbReference type="PANTHER" id="PTHR11702:SF31">
    <property type="entry name" value="MITOCHONDRIAL RIBOSOME-ASSOCIATED GTPASE 2"/>
    <property type="match status" value="1"/>
</dbReference>
<dbReference type="Pfam" id="PF01018">
    <property type="entry name" value="GTP1_OBG"/>
    <property type="match status" value="1"/>
</dbReference>
<dbReference type="Pfam" id="PF01926">
    <property type="entry name" value="MMR_HSR1"/>
    <property type="match status" value="1"/>
</dbReference>
<dbReference type="PIRSF" id="PIRSF002401">
    <property type="entry name" value="GTP_bd_Obg/CgtA"/>
    <property type="match status" value="1"/>
</dbReference>
<dbReference type="PRINTS" id="PR00326">
    <property type="entry name" value="GTP1OBG"/>
</dbReference>
<dbReference type="SUPFAM" id="SSF82051">
    <property type="entry name" value="Obg GTP-binding protein N-terminal domain"/>
    <property type="match status" value="1"/>
</dbReference>
<dbReference type="SUPFAM" id="SSF52540">
    <property type="entry name" value="P-loop containing nucleoside triphosphate hydrolases"/>
    <property type="match status" value="1"/>
</dbReference>
<dbReference type="PROSITE" id="PS51710">
    <property type="entry name" value="G_OBG"/>
    <property type="match status" value="1"/>
</dbReference>
<dbReference type="PROSITE" id="PS51883">
    <property type="entry name" value="OBG"/>
    <property type="match status" value="1"/>
</dbReference>
<name>OBG_PROMM</name>
<organism>
    <name type="scientific">Prochlorococcus marinus (strain MIT 9313)</name>
    <dbReference type="NCBI Taxonomy" id="74547"/>
    <lineage>
        <taxon>Bacteria</taxon>
        <taxon>Bacillati</taxon>
        <taxon>Cyanobacteriota</taxon>
        <taxon>Cyanophyceae</taxon>
        <taxon>Synechococcales</taxon>
        <taxon>Prochlorococcaceae</taxon>
        <taxon>Prochlorococcus</taxon>
    </lineage>
</organism>
<gene>
    <name evidence="1" type="primary">obg</name>
    <name type="ordered locus">PMT_1544</name>
</gene>